<protein>
    <recommendedName>
        <fullName>Uncharacterized protein Lmo1967</fullName>
    </recommendedName>
</protein>
<keyword id="KW-1185">Reference proteome</keyword>
<accession>Q8Y5T8</accession>
<feature type="chain" id="PRO_0000172811" description="Uncharacterized protein Lmo1967">
    <location>
        <begin position="1"/>
        <end position="399"/>
    </location>
</feature>
<comment type="similarity">
    <text evidence="1">Belongs to the TelA family.</text>
</comment>
<sequence>MTENKPSEQTNELKDLVVEKEFNQTLDDLLANPFGSDGESAASIVNNETDAAPRLVDMLTETNKKQALELSKQIEPGNQAAILGYGAPAQAKLHDFSHSMLAHVQKQDVGPIGDIISDLMYRLQEADPDELAARNKNVFTKMFHRVKQSINEITSKYQKIGTQIDRIALKLEHSKKRLMEDNSFLEQLYDKNKDYFQALNIYIAAGELKLEEINTKMLPELRKKAEQTGDQMDYQEVNDLTQFADRLDKRVYDLRLSRQITIQQAPQIRLIQNTNQALAEKIQSSIMTAIPLWKNQVAIALTLLRQQQAVAAQRQVSETTNELLKRNADMLKTNAIETARENERGIVDIETLKETQSSLIETLQETLKIQQEGRAKRAVAEKELVTMEQELKERLLEMK</sequence>
<name>Y1967_LISMO</name>
<organism>
    <name type="scientific">Listeria monocytogenes serovar 1/2a (strain ATCC BAA-679 / EGD-e)</name>
    <dbReference type="NCBI Taxonomy" id="169963"/>
    <lineage>
        <taxon>Bacteria</taxon>
        <taxon>Bacillati</taxon>
        <taxon>Bacillota</taxon>
        <taxon>Bacilli</taxon>
        <taxon>Bacillales</taxon>
        <taxon>Listeriaceae</taxon>
        <taxon>Listeria</taxon>
    </lineage>
</organism>
<evidence type="ECO:0000305" key="1"/>
<gene>
    <name type="ordered locus">lmo1967</name>
</gene>
<reference key="1">
    <citation type="journal article" date="2001" name="Science">
        <title>Comparative genomics of Listeria species.</title>
        <authorList>
            <person name="Glaser P."/>
            <person name="Frangeul L."/>
            <person name="Buchrieser C."/>
            <person name="Rusniok C."/>
            <person name="Amend A."/>
            <person name="Baquero F."/>
            <person name="Berche P."/>
            <person name="Bloecker H."/>
            <person name="Brandt P."/>
            <person name="Chakraborty T."/>
            <person name="Charbit A."/>
            <person name="Chetouani F."/>
            <person name="Couve E."/>
            <person name="de Daruvar A."/>
            <person name="Dehoux P."/>
            <person name="Domann E."/>
            <person name="Dominguez-Bernal G."/>
            <person name="Duchaud E."/>
            <person name="Durant L."/>
            <person name="Dussurget O."/>
            <person name="Entian K.-D."/>
            <person name="Fsihi H."/>
            <person name="Garcia-del Portillo F."/>
            <person name="Garrido P."/>
            <person name="Gautier L."/>
            <person name="Goebel W."/>
            <person name="Gomez-Lopez N."/>
            <person name="Hain T."/>
            <person name="Hauf J."/>
            <person name="Jackson D."/>
            <person name="Jones L.-M."/>
            <person name="Kaerst U."/>
            <person name="Kreft J."/>
            <person name="Kuhn M."/>
            <person name="Kunst F."/>
            <person name="Kurapkat G."/>
            <person name="Madueno E."/>
            <person name="Maitournam A."/>
            <person name="Mata Vicente J."/>
            <person name="Ng E."/>
            <person name="Nedjari H."/>
            <person name="Nordsiek G."/>
            <person name="Novella S."/>
            <person name="de Pablos B."/>
            <person name="Perez-Diaz J.-C."/>
            <person name="Purcell R."/>
            <person name="Remmel B."/>
            <person name="Rose M."/>
            <person name="Schlueter T."/>
            <person name="Simoes N."/>
            <person name="Tierrez A."/>
            <person name="Vazquez-Boland J.-A."/>
            <person name="Voss H."/>
            <person name="Wehland J."/>
            <person name="Cossart P."/>
        </authorList>
    </citation>
    <scope>NUCLEOTIDE SEQUENCE [LARGE SCALE GENOMIC DNA]</scope>
    <source>
        <strain>ATCC BAA-679 / EGD-e</strain>
    </source>
</reference>
<dbReference type="EMBL" id="AL591981">
    <property type="protein sequence ID" value="CAD00045.1"/>
    <property type="molecule type" value="Genomic_DNA"/>
</dbReference>
<dbReference type="PIR" id="AG1320">
    <property type="entry name" value="AG1320"/>
</dbReference>
<dbReference type="RefSeq" id="NP_465491.1">
    <property type="nucleotide sequence ID" value="NC_003210.1"/>
</dbReference>
<dbReference type="RefSeq" id="WP_003723133.1">
    <property type="nucleotide sequence ID" value="NZ_CP149495.1"/>
</dbReference>
<dbReference type="SMR" id="Q8Y5T8"/>
<dbReference type="STRING" id="169963.gene:17594652"/>
<dbReference type="PaxDb" id="169963-lmo1967"/>
<dbReference type="EnsemblBacteria" id="CAD00045">
    <property type="protein sequence ID" value="CAD00045"/>
    <property type="gene ID" value="CAD00045"/>
</dbReference>
<dbReference type="GeneID" id="987886"/>
<dbReference type="KEGG" id="lmo:lmo1967"/>
<dbReference type="PATRIC" id="fig|169963.11.peg.2014"/>
<dbReference type="eggNOG" id="COG3853">
    <property type="taxonomic scope" value="Bacteria"/>
</dbReference>
<dbReference type="HOGENOM" id="CLU_032111_0_0_9"/>
<dbReference type="OrthoDB" id="9768858at2"/>
<dbReference type="PhylomeDB" id="Q8Y5T8"/>
<dbReference type="BioCyc" id="LMON169963:LMO1967-MONOMER"/>
<dbReference type="Proteomes" id="UP000000817">
    <property type="component" value="Chromosome"/>
</dbReference>
<dbReference type="InterPro" id="IPR008863">
    <property type="entry name" value="Toxic_anion-R_TelA"/>
</dbReference>
<dbReference type="PANTHER" id="PTHR38432">
    <property type="entry name" value="TELA-LIKE PROTEIN SAOUHSC_01408"/>
    <property type="match status" value="1"/>
</dbReference>
<dbReference type="PANTHER" id="PTHR38432:SF1">
    <property type="entry name" value="TELA-LIKE PROTEIN SAOUHSC_01408"/>
    <property type="match status" value="1"/>
</dbReference>
<dbReference type="Pfam" id="PF05816">
    <property type="entry name" value="TelA"/>
    <property type="match status" value="1"/>
</dbReference>
<dbReference type="PIRSF" id="PIRSF026508">
    <property type="entry name" value="TelA"/>
    <property type="match status" value="1"/>
</dbReference>
<proteinExistence type="inferred from homology"/>